<organism>
    <name type="scientific">Capra falconeri</name>
    <name type="common">Markhor</name>
    <dbReference type="NCBI Taxonomy" id="48167"/>
    <lineage>
        <taxon>Eukaryota</taxon>
        <taxon>Metazoa</taxon>
        <taxon>Chordata</taxon>
        <taxon>Craniata</taxon>
        <taxon>Vertebrata</taxon>
        <taxon>Euteleostomi</taxon>
        <taxon>Mammalia</taxon>
        <taxon>Eutheria</taxon>
        <taxon>Laurasiatheria</taxon>
        <taxon>Artiodactyla</taxon>
        <taxon>Ruminantia</taxon>
        <taxon>Pecora</taxon>
        <taxon>Bovidae</taxon>
        <taxon>Caprinae</taxon>
        <taxon>Capra</taxon>
    </lineage>
</organism>
<comment type="function">
    <text evidence="2">Component of the ubiquinol-cytochrome c reductase complex (complex III or cytochrome b-c1 complex) that is part of the mitochondrial respiratory chain. The b-c1 complex mediates electron transfer from ubiquinol to cytochrome c. Contributes to the generation of a proton gradient across the mitochondrial membrane that is then used for ATP synthesis.</text>
</comment>
<comment type="cofactor">
    <cofactor evidence="2">
        <name>heme b</name>
        <dbReference type="ChEBI" id="CHEBI:60344"/>
    </cofactor>
    <text evidence="2">Binds 2 heme b groups non-covalently.</text>
</comment>
<comment type="subunit">
    <text evidence="2">The cytochrome bc1 complex contains 11 subunits: 3 respiratory subunits (MT-CYB, CYC1 and UQCRFS1), 2 core proteins (UQCRC1 and UQCRC2) and 6 low-molecular weight proteins (UQCRH/QCR6, UQCRB/QCR7, UQCRQ/QCR8, UQCR10/QCR9, UQCR11/QCR10 and a cleavage product of UQCRFS1). This cytochrome bc1 complex then forms a dimer.</text>
</comment>
<comment type="subcellular location">
    <subcellularLocation>
        <location evidence="2">Mitochondrion inner membrane</location>
        <topology evidence="2">Multi-pass membrane protein</topology>
    </subcellularLocation>
</comment>
<comment type="miscellaneous">
    <text evidence="1">Heme 1 (or BL or b562) is low-potential and absorbs at about 562 nm, and heme 2 (or BH or b566) is high-potential and absorbs at about 566 nm.</text>
</comment>
<comment type="similarity">
    <text evidence="3 4">Belongs to the cytochrome b family.</text>
</comment>
<comment type="caution">
    <text evidence="2">The full-length protein contains only eight transmembrane helices, not nine as predicted by bioinformatics tools.</text>
</comment>
<dbReference type="EMBL" id="AF034736">
    <property type="protein sequence ID" value="AAC31691.1"/>
    <property type="molecule type" value="Genomic_DNA"/>
</dbReference>
<dbReference type="RefSeq" id="YP_007625054.1">
    <property type="nucleotide sequence ID" value="NC_020622.1"/>
</dbReference>
<dbReference type="SMR" id="O78786"/>
<dbReference type="GeneID" id="14841599"/>
<dbReference type="CTD" id="4519"/>
<dbReference type="GO" id="GO:0005743">
    <property type="term" value="C:mitochondrial inner membrane"/>
    <property type="evidence" value="ECO:0007669"/>
    <property type="project" value="UniProtKB-SubCell"/>
</dbReference>
<dbReference type="GO" id="GO:0045275">
    <property type="term" value="C:respiratory chain complex III"/>
    <property type="evidence" value="ECO:0007669"/>
    <property type="project" value="InterPro"/>
</dbReference>
<dbReference type="GO" id="GO:0046872">
    <property type="term" value="F:metal ion binding"/>
    <property type="evidence" value="ECO:0007669"/>
    <property type="project" value="UniProtKB-KW"/>
</dbReference>
<dbReference type="GO" id="GO:0008121">
    <property type="term" value="F:ubiquinol-cytochrome-c reductase activity"/>
    <property type="evidence" value="ECO:0007669"/>
    <property type="project" value="InterPro"/>
</dbReference>
<dbReference type="GO" id="GO:0006122">
    <property type="term" value="P:mitochondrial electron transport, ubiquinol to cytochrome c"/>
    <property type="evidence" value="ECO:0007669"/>
    <property type="project" value="TreeGrafter"/>
</dbReference>
<dbReference type="CDD" id="cd00290">
    <property type="entry name" value="cytochrome_b_C"/>
    <property type="match status" value="1"/>
</dbReference>
<dbReference type="CDD" id="cd00284">
    <property type="entry name" value="Cytochrome_b_N"/>
    <property type="match status" value="1"/>
</dbReference>
<dbReference type="FunFam" id="1.20.810.10:FF:000002">
    <property type="entry name" value="Cytochrome b"/>
    <property type="match status" value="1"/>
</dbReference>
<dbReference type="Gene3D" id="1.20.810.10">
    <property type="entry name" value="Cytochrome Bc1 Complex, Chain C"/>
    <property type="match status" value="1"/>
</dbReference>
<dbReference type="InterPro" id="IPR005798">
    <property type="entry name" value="Cyt_b/b6_C"/>
</dbReference>
<dbReference type="InterPro" id="IPR036150">
    <property type="entry name" value="Cyt_b/b6_C_sf"/>
</dbReference>
<dbReference type="InterPro" id="IPR005797">
    <property type="entry name" value="Cyt_b/b6_N"/>
</dbReference>
<dbReference type="InterPro" id="IPR027387">
    <property type="entry name" value="Cytb/b6-like_sf"/>
</dbReference>
<dbReference type="InterPro" id="IPR030689">
    <property type="entry name" value="Cytochrome_b"/>
</dbReference>
<dbReference type="InterPro" id="IPR048260">
    <property type="entry name" value="Cytochrome_b_C_euk/bac"/>
</dbReference>
<dbReference type="InterPro" id="IPR048259">
    <property type="entry name" value="Cytochrome_b_N_euk/bac"/>
</dbReference>
<dbReference type="InterPro" id="IPR016174">
    <property type="entry name" value="Di-haem_cyt_TM"/>
</dbReference>
<dbReference type="PANTHER" id="PTHR19271">
    <property type="entry name" value="CYTOCHROME B"/>
    <property type="match status" value="1"/>
</dbReference>
<dbReference type="PANTHER" id="PTHR19271:SF16">
    <property type="entry name" value="CYTOCHROME B"/>
    <property type="match status" value="1"/>
</dbReference>
<dbReference type="Pfam" id="PF00032">
    <property type="entry name" value="Cytochrom_B_C"/>
    <property type="match status" value="1"/>
</dbReference>
<dbReference type="Pfam" id="PF00033">
    <property type="entry name" value="Cytochrome_B"/>
    <property type="match status" value="1"/>
</dbReference>
<dbReference type="PIRSF" id="PIRSF038885">
    <property type="entry name" value="COB"/>
    <property type="match status" value="1"/>
</dbReference>
<dbReference type="SUPFAM" id="SSF81648">
    <property type="entry name" value="a domain/subunit of cytochrome bc1 complex (Ubiquinol-cytochrome c reductase)"/>
    <property type="match status" value="1"/>
</dbReference>
<dbReference type="SUPFAM" id="SSF81342">
    <property type="entry name" value="Transmembrane di-heme cytochromes"/>
    <property type="match status" value="1"/>
</dbReference>
<dbReference type="PROSITE" id="PS51003">
    <property type="entry name" value="CYTB_CTER"/>
    <property type="match status" value="1"/>
</dbReference>
<dbReference type="PROSITE" id="PS51002">
    <property type="entry name" value="CYTB_NTER"/>
    <property type="match status" value="1"/>
</dbReference>
<protein>
    <recommendedName>
        <fullName>Cytochrome b</fullName>
    </recommendedName>
    <alternativeName>
        <fullName>Complex III subunit 3</fullName>
    </alternativeName>
    <alternativeName>
        <fullName>Complex III subunit III</fullName>
    </alternativeName>
    <alternativeName>
        <fullName>Cytochrome b-c1 complex subunit 3</fullName>
    </alternativeName>
    <alternativeName>
        <fullName>Ubiquinol-cytochrome-c reductase complex cytochrome b subunit</fullName>
    </alternativeName>
</protein>
<gene>
    <name type="primary">MT-CYB</name>
    <name type="synonym">COB</name>
    <name type="synonym">CYTB</name>
    <name type="synonym">MTCYB</name>
</gene>
<reference key="1">
    <citation type="journal article" date="1998" name="J. Mammal. Evol.">
        <title>Molecular systematics of the subfamily Caprinae (Artiodactyla, Bovidae) as determined from cytochrome b sequences.</title>
        <authorList>
            <person name="Hassanin A."/>
            <person name="Pasquet E."/>
            <person name="Vigne J.-D."/>
        </authorList>
    </citation>
    <scope>NUCLEOTIDE SEQUENCE [GENOMIC DNA]</scope>
</reference>
<feature type="chain" id="PRO_0000060724" description="Cytochrome b">
    <location>
        <begin position="1"/>
        <end position="379"/>
    </location>
</feature>
<feature type="transmembrane region" description="Helical" evidence="2">
    <location>
        <begin position="33"/>
        <end position="53"/>
    </location>
</feature>
<feature type="transmembrane region" description="Helical" evidence="2">
    <location>
        <begin position="77"/>
        <end position="98"/>
    </location>
</feature>
<feature type="transmembrane region" description="Helical" evidence="2">
    <location>
        <begin position="113"/>
        <end position="133"/>
    </location>
</feature>
<feature type="transmembrane region" description="Helical" evidence="2">
    <location>
        <begin position="178"/>
        <end position="198"/>
    </location>
</feature>
<feature type="transmembrane region" description="Helical" evidence="2">
    <location>
        <begin position="226"/>
        <end position="246"/>
    </location>
</feature>
<feature type="transmembrane region" description="Helical" evidence="2">
    <location>
        <begin position="288"/>
        <end position="308"/>
    </location>
</feature>
<feature type="transmembrane region" description="Helical" evidence="2">
    <location>
        <begin position="320"/>
        <end position="340"/>
    </location>
</feature>
<feature type="transmembrane region" description="Helical" evidence="2">
    <location>
        <begin position="347"/>
        <end position="367"/>
    </location>
</feature>
<feature type="binding site" description="axial binding residue" evidence="2">
    <location>
        <position position="83"/>
    </location>
    <ligand>
        <name>heme b</name>
        <dbReference type="ChEBI" id="CHEBI:60344"/>
        <label>b562</label>
    </ligand>
    <ligandPart>
        <name>Fe</name>
        <dbReference type="ChEBI" id="CHEBI:18248"/>
    </ligandPart>
</feature>
<feature type="binding site" description="axial binding residue" evidence="2">
    <location>
        <position position="97"/>
    </location>
    <ligand>
        <name>heme b</name>
        <dbReference type="ChEBI" id="CHEBI:60344"/>
        <label>b566</label>
    </ligand>
    <ligandPart>
        <name>Fe</name>
        <dbReference type="ChEBI" id="CHEBI:18248"/>
    </ligandPart>
</feature>
<feature type="binding site" description="axial binding residue" evidence="2">
    <location>
        <position position="182"/>
    </location>
    <ligand>
        <name>heme b</name>
        <dbReference type="ChEBI" id="CHEBI:60344"/>
        <label>b562</label>
    </ligand>
    <ligandPart>
        <name>Fe</name>
        <dbReference type="ChEBI" id="CHEBI:18248"/>
    </ligandPart>
</feature>
<feature type="binding site" description="axial binding residue" evidence="2">
    <location>
        <position position="196"/>
    </location>
    <ligand>
        <name>heme b</name>
        <dbReference type="ChEBI" id="CHEBI:60344"/>
        <label>b566</label>
    </ligand>
    <ligandPart>
        <name>Fe</name>
        <dbReference type="ChEBI" id="CHEBI:18248"/>
    </ligandPart>
</feature>
<feature type="binding site" evidence="2">
    <location>
        <position position="201"/>
    </location>
    <ligand>
        <name>a ubiquinone</name>
        <dbReference type="ChEBI" id="CHEBI:16389"/>
    </ligand>
</feature>
<geneLocation type="mitochondrion"/>
<accession>O78786</accession>
<proteinExistence type="inferred from homology"/>
<sequence>MTNIRKTHPLMKIVNNAFIDLPTPSNISSWWNFGSLLGICLILQILTGLFLAMHYTSDTMTAFSSVTHICRDVNYGWIIRYMHANGASMFFICLFMHVGRGLYYGSYTFLETWNIGVILLLATMATAFMGYVLPWGQMSFWGATVITNLLSAIPYIGTNLVEWIWGGFSVDKATLTRFFAFHFILPFIIAALAMVHLLFLHETGSNNPTGIPSDTDKIPFHPYYTIKDILGAMLLILVLMLLVLFTPDLLGDPDNYIPANPLNTPPHIKPEWYFLFAYAILRSIPNKLGGVLALVLSILILVLMPFLHTSKQRSMMFRPISQCMFWILVADLLTLTWIGGQPVEHPYIIIGQLASIMYFLIILVMMPAASTIENNLLKW</sequence>
<keyword id="KW-0249">Electron transport</keyword>
<keyword id="KW-0349">Heme</keyword>
<keyword id="KW-0408">Iron</keyword>
<keyword id="KW-0472">Membrane</keyword>
<keyword id="KW-0479">Metal-binding</keyword>
<keyword id="KW-0496">Mitochondrion</keyword>
<keyword id="KW-0999">Mitochondrion inner membrane</keyword>
<keyword id="KW-0679">Respiratory chain</keyword>
<keyword id="KW-0812">Transmembrane</keyword>
<keyword id="KW-1133">Transmembrane helix</keyword>
<keyword id="KW-0813">Transport</keyword>
<keyword id="KW-0830">Ubiquinone</keyword>
<evidence type="ECO:0000250" key="1"/>
<evidence type="ECO:0000250" key="2">
    <source>
        <dbReference type="UniProtKB" id="P00157"/>
    </source>
</evidence>
<evidence type="ECO:0000255" key="3">
    <source>
        <dbReference type="PROSITE-ProRule" id="PRU00967"/>
    </source>
</evidence>
<evidence type="ECO:0000255" key="4">
    <source>
        <dbReference type="PROSITE-ProRule" id="PRU00968"/>
    </source>
</evidence>
<name>CYB_CAPFA</name>